<organism>
    <name type="scientific">Hydrogenovibrio crunogenus (strain DSM 25203 / XCL-2)</name>
    <name type="common">Thiomicrospira crunogena</name>
    <dbReference type="NCBI Taxonomy" id="317025"/>
    <lineage>
        <taxon>Bacteria</taxon>
        <taxon>Pseudomonadati</taxon>
        <taxon>Pseudomonadota</taxon>
        <taxon>Gammaproteobacteria</taxon>
        <taxon>Thiotrichales</taxon>
        <taxon>Piscirickettsiaceae</taxon>
        <taxon>Hydrogenovibrio</taxon>
    </lineage>
</organism>
<reference key="1">
    <citation type="journal article" date="2006" name="PLoS Biol.">
        <title>The genome of deep-sea vent chemolithoautotroph Thiomicrospira crunogena XCL-2.</title>
        <authorList>
            <person name="Scott K.M."/>
            <person name="Sievert S.M."/>
            <person name="Abril F.N."/>
            <person name="Ball L.A."/>
            <person name="Barrett C.J."/>
            <person name="Blake R.A."/>
            <person name="Boller A.J."/>
            <person name="Chain P.S.G."/>
            <person name="Clark J.A."/>
            <person name="Davis C.R."/>
            <person name="Detter C."/>
            <person name="Do K.F."/>
            <person name="Dobrinski K.P."/>
            <person name="Faza B.I."/>
            <person name="Fitzpatrick K.A."/>
            <person name="Freyermuth S.K."/>
            <person name="Harmer T.L."/>
            <person name="Hauser L.J."/>
            <person name="Huegler M."/>
            <person name="Kerfeld C.A."/>
            <person name="Klotz M.G."/>
            <person name="Kong W.W."/>
            <person name="Land M."/>
            <person name="Lapidus A."/>
            <person name="Larimer F.W."/>
            <person name="Longo D.L."/>
            <person name="Lucas S."/>
            <person name="Malfatti S.A."/>
            <person name="Massey S.E."/>
            <person name="Martin D.D."/>
            <person name="McCuddin Z."/>
            <person name="Meyer F."/>
            <person name="Moore J.L."/>
            <person name="Ocampo L.H. Jr."/>
            <person name="Paul J.H."/>
            <person name="Paulsen I.T."/>
            <person name="Reep D.K."/>
            <person name="Ren Q."/>
            <person name="Ross R.L."/>
            <person name="Sato P.Y."/>
            <person name="Thomas P."/>
            <person name="Tinkham L.E."/>
            <person name="Zeruth G.T."/>
        </authorList>
    </citation>
    <scope>NUCLEOTIDE SEQUENCE [LARGE SCALE GENOMIC DNA]</scope>
    <source>
        <strain>DSM 25203 / XCL-2</strain>
    </source>
</reference>
<evidence type="ECO:0000255" key="1">
    <source>
        <dbReference type="HAMAP-Rule" id="MF_00298"/>
    </source>
</evidence>
<comment type="function">
    <text evidence="1">Accelerates the degradation of transcripts by removing pyrophosphate from the 5'-end of triphosphorylated RNA, leading to a more labile monophosphorylated state that can stimulate subsequent ribonuclease cleavage.</text>
</comment>
<comment type="cofactor">
    <cofactor evidence="1">
        <name>a divalent metal cation</name>
        <dbReference type="ChEBI" id="CHEBI:60240"/>
    </cofactor>
</comment>
<comment type="similarity">
    <text evidence="1">Belongs to the Nudix hydrolase family. RppH subfamily.</text>
</comment>
<sequence>MIDADGYRPNVGIIIVNKEGKLFWGKRLYQDAWQFPQGGVRENETPQQAVFRELKEEVGLEPSDVRVLGRTKDWLTYDLPKHLIRHYSQPVCIGQKQIWFLLGMLSDDEKINLNTHETPEFEGWSWVDYWVPVQNVVEFKQSVYHQALTELETHLHKFWTKEHVG</sequence>
<gene>
    <name evidence="1" type="primary">rppH</name>
    <name evidence="1" type="synonym">nudH</name>
    <name type="ordered locus">Tcr_1000</name>
</gene>
<feature type="chain" id="PRO_0000231941" description="RNA pyrophosphohydrolase">
    <location>
        <begin position="1"/>
        <end position="165"/>
    </location>
</feature>
<feature type="domain" description="Nudix hydrolase" evidence="1">
    <location>
        <begin position="6"/>
        <end position="149"/>
    </location>
</feature>
<feature type="short sequence motif" description="Nudix box">
    <location>
        <begin position="38"/>
        <end position="59"/>
    </location>
</feature>
<accession>Q31GX8</accession>
<proteinExistence type="inferred from homology"/>
<name>RPPH_HYDCU</name>
<keyword id="KW-0378">Hydrolase</keyword>
<dbReference type="EC" id="3.6.1.-" evidence="1"/>
<dbReference type="EMBL" id="CP000109">
    <property type="protein sequence ID" value="ABB41595.1"/>
    <property type="molecule type" value="Genomic_DNA"/>
</dbReference>
<dbReference type="SMR" id="Q31GX8"/>
<dbReference type="STRING" id="317025.Tcr_1000"/>
<dbReference type="KEGG" id="tcx:Tcr_1000"/>
<dbReference type="eggNOG" id="COG1051">
    <property type="taxonomic scope" value="Bacteria"/>
</dbReference>
<dbReference type="HOGENOM" id="CLU_087195_3_1_6"/>
<dbReference type="OrthoDB" id="9816040at2"/>
<dbReference type="GO" id="GO:0016462">
    <property type="term" value="F:pyrophosphatase activity"/>
    <property type="evidence" value="ECO:0007669"/>
    <property type="project" value="UniProtKB-ARBA"/>
</dbReference>
<dbReference type="CDD" id="cd03671">
    <property type="entry name" value="NUDIX_Ap4A_hydrolase_plant_like"/>
    <property type="match status" value="1"/>
</dbReference>
<dbReference type="FunFam" id="3.90.79.10:FF:000001">
    <property type="entry name" value="RNA pyrophosphohydrolase"/>
    <property type="match status" value="1"/>
</dbReference>
<dbReference type="Gene3D" id="3.90.79.10">
    <property type="entry name" value="Nucleoside Triphosphate Pyrophosphohydrolase"/>
    <property type="match status" value="1"/>
</dbReference>
<dbReference type="HAMAP" id="MF_00298">
    <property type="entry name" value="Nudix_RppH"/>
    <property type="match status" value="1"/>
</dbReference>
<dbReference type="InterPro" id="IPR020476">
    <property type="entry name" value="Nudix_hydrolase"/>
</dbReference>
<dbReference type="InterPro" id="IPR015797">
    <property type="entry name" value="NUDIX_hydrolase-like_dom_sf"/>
</dbReference>
<dbReference type="InterPro" id="IPR020084">
    <property type="entry name" value="NUDIX_hydrolase_CS"/>
</dbReference>
<dbReference type="InterPro" id="IPR000086">
    <property type="entry name" value="NUDIX_hydrolase_dom"/>
</dbReference>
<dbReference type="InterPro" id="IPR022927">
    <property type="entry name" value="RppH"/>
</dbReference>
<dbReference type="NCBIfam" id="NF001937">
    <property type="entry name" value="PRK00714.1-4"/>
    <property type="match status" value="1"/>
</dbReference>
<dbReference type="NCBIfam" id="NF001938">
    <property type="entry name" value="PRK00714.1-5"/>
    <property type="match status" value="1"/>
</dbReference>
<dbReference type="PANTHER" id="PTHR43736">
    <property type="entry name" value="ADP-RIBOSE PYROPHOSPHATASE"/>
    <property type="match status" value="1"/>
</dbReference>
<dbReference type="PANTHER" id="PTHR43736:SF1">
    <property type="entry name" value="DIHYDRONEOPTERIN TRIPHOSPHATE DIPHOSPHATASE"/>
    <property type="match status" value="1"/>
</dbReference>
<dbReference type="Pfam" id="PF00293">
    <property type="entry name" value="NUDIX"/>
    <property type="match status" value="1"/>
</dbReference>
<dbReference type="PRINTS" id="PR00502">
    <property type="entry name" value="NUDIXFAMILY"/>
</dbReference>
<dbReference type="SUPFAM" id="SSF55811">
    <property type="entry name" value="Nudix"/>
    <property type="match status" value="1"/>
</dbReference>
<dbReference type="PROSITE" id="PS51462">
    <property type="entry name" value="NUDIX"/>
    <property type="match status" value="1"/>
</dbReference>
<dbReference type="PROSITE" id="PS00893">
    <property type="entry name" value="NUDIX_BOX"/>
    <property type="match status" value="1"/>
</dbReference>
<protein>
    <recommendedName>
        <fullName evidence="1">RNA pyrophosphohydrolase</fullName>
        <ecNumber evidence="1">3.6.1.-</ecNumber>
    </recommendedName>
    <alternativeName>
        <fullName evidence="1">(Di)nucleoside polyphosphate hydrolase</fullName>
    </alternativeName>
</protein>